<gene>
    <name evidence="1" type="primary">asnS</name>
    <name type="ordered locus">SBO_2221</name>
</gene>
<proteinExistence type="inferred from homology"/>
<comment type="catalytic activity">
    <reaction evidence="1">
        <text>tRNA(Asn) + L-asparagine + ATP = L-asparaginyl-tRNA(Asn) + AMP + diphosphate + H(+)</text>
        <dbReference type="Rhea" id="RHEA:11180"/>
        <dbReference type="Rhea" id="RHEA-COMP:9659"/>
        <dbReference type="Rhea" id="RHEA-COMP:9674"/>
        <dbReference type="ChEBI" id="CHEBI:15378"/>
        <dbReference type="ChEBI" id="CHEBI:30616"/>
        <dbReference type="ChEBI" id="CHEBI:33019"/>
        <dbReference type="ChEBI" id="CHEBI:58048"/>
        <dbReference type="ChEBI" id="CHEBI:78442"/>
        <dbReference type="ChEBI" id="CHEBI:78515"/>
        <dbReference type="ChEBI" id="CHEBI:456215"/>
        <dbReference type="EC" id="6.1.1.22"/>
    </reaction>
</comment>
<comment type="subunit">
    <text evidence="1">Homodimer.</text>
</comment>
<comment type="subcellular location">
    <subcellularLocation>
        <location evidence="1">Cytoplasm</location>
    </subcellularLocation>
</comment>
<comment type="similarity">
    <text evidence="1">Belongs to the class-II aminoacyl-tRNA synthetase family.</text>
</comment>
<dbReference type="EC" id="6.1.1.22" evidence="1"/>
<dbReference type="EMBL" id="CP000036">
    <property type="protein sequence ID" value="ABB66791.1"/>
    <property type="molecule type" value="Genomic_DNA"/>
</dbReference>
<dbReference type="RefSeq" id="WP_000117881.1">
    <property type="nucleotide sequence ID" value="NC_007613.1"/>
</dbReference>
<dbReference type="SMR" id="Q31YR7"/>
<dbReference type="GeneID" id="93776484"/>
<dbReference type="KEGG" id="sbo:SBO_2221"/>
<dbReference type="HOGENOM" id="CLU_004553_2_0_6"/>
<dbReference type="Proteomes" id="UP000007067">
    <property type="component" value="Chromosome"/>
</dbReference>
<dbReference type="GO" id="GO:0005737">
    <property type="term" value="C:cytoplasm"/>
    <property type="evidence" value="ECO:0007669"/>
    <property type="project" value="UniProtKB-SubCell"/>
</dbReference>
<dbReference type="GO" id="GO:0004816">
    <property type="term" value="F:asparagine-tRNA ligase activity"/>
    <property type="evidence" value="ECO:0007669"/>
    <property type="project" value="UniProtKB-UniRule"/>
</dbReference>
<dbReference type="GO" id="GO:0005524">
    <property type="term" value="F:ATP binding"/>
    <property type="evidence" value="ECO:0007669"/>
    <property type="project" value="UniProtKB-UniRule"/>
</dbReference>
<dbReference type="GO" id="GO:0003676">
    <property type="term" value="F:nucleic acid binding"/>
    <property type="evidence" value="ECO:0007669"/>
    <property type="project" value="InterPro"/>
</dbReference>
<dbReference type="GO" id="GO:0006421">
    <property type="term" value="P:asparaginyl-tRNA aminoacylation"/>
    <property type="evidence" value="ECO:0007669"/>
    <property type="project" value="UniProtKB-UniRule"/>
</dbReference>
<dbReference type="CDD" id="cd00776">
    <property type="entry name" value="AsxRS_core"/>
    <property type="match status" value="1"/>
</dbReference>
<dbReference type="CDD" id="cd04318">
    <property type="entry name" value="EcAsnRS_like_N"/>
    <property type="match status" value="1"/>
</dbReference>
<dbReference type="FunFam" id="2.40.50.140:FF:000116">
    <property type="entry name" value="Asparagine--tRNA ligase"/>
    <property type="match status" value="1"/>
</dbReference>
<dbReference type="FunFam" id="3.30.930.10:FF:000016">
    <property type="entry name" value="Asparagine--tRNA ligase"/>
    <property type="match status" value="1"/>
</dbReference>
<dbReference type="Gene3D" id="3.30.930.10">
    <property type="entry name" value="Bira Bifunctional Protein, Domain 2"/>
    <property type="match status" value="1"/>
</dbReference>
<dbReference type="Gene3D" id="2.40.50.140">
    <property type="entry name" value="Nucleic acid-binding proteins"/>
    <property type="match status" value="1"/>
</dbReference>
<dbReference type="HAMAP" id="MF_00534">
    <property type="entry name" value="Asn_tRNA_synth"/>
    <property type="match status" value="1"/>
</dbReference>
<dbReference type="InterPro" id="IPR004364">
    <property type="entry name" value="Aa-tRNA-synt_II"/>
</dbReference>
<dbReference type="InterPro" id="IPR006195">
    <property type="entry name" value="aa-tRNA-synth_II"/>
</dbReference>
<dbReference type="InterPro" id="IPR045864">
    <property type="entry name" value="aa-tRNA-synth_II/BPL/LPL"/>
</dbReference>
<dbReference type="InterPro" id="IPR004522">
    <property type="entry name" value="Asn-tRNA-ligase"/>
</dbReference>
<dbReference type="InterPro" id="IPR002312">
    <property type="entry name" value="Asp/Asn-tRNA-synth_IIb"/>
</dbReference>
<dbReference type="InterPro" id="IPR012340">
    <property type="entry name" value="NA-bd_OB-fold"/>
</dbReference>
<dbReference type="InterPro" id="IPR004365">
    <property type="entry name" value="NA-bd_OB_tRNA"/>
</dbReference>
<dbReference type="NCBIfam" id="TIGR00457">
    <property type="entry name" value="asnS"/>
    <property type="match status" value="1"/>
</dbReference>
<dbReference type="NCBIfam" id="NF003037">
    <property type="entry name" value="PRK03932.1"/>
    <property type="match status" value="1"/>
</dbReference>
<dbReference type="PANTHER" id="PTHR22594:SF34">
    <property type="entry name" value="ASPARAGINE--TRNA LIGASE, MITOCHONDRIAL-RELATED"/>
    <property type="match status" value="1"/>
</dbReference>
<dbReference type="PANTHER" id="PTHR22594">
    <property type="entry name" value="ASPARTYL/LYSYL-TRNA SYNTHETASE"/>
    <property type="match status" value="1"/>
</dbReference>
<dbReference type="Pfam" id="PF00152">
    <property type="entry name" value="tRNA-synt_2"/>
    <property type="match status" value="1"/>
</dbReference>
<dbReference type="Pfam" id="PF01336">
    <property type="entry name" value="tRNA_anti-codon"/>
    <property type="match status" value="1"/>
</dbReference>
<dbReference type="PRINTS" id="PR01042">
    <property type="entry name" value="TRNASYNTHASP"/>
</dbReference>
<dbReference type="SUPFAM" id="SSF55681">
    <property type="entry name" value="Class II aaRS and biotin synthetases"/>
    <property type="match status" value="1"/>
</dbReference>
<dbReference type="SUPFAM" id="SSF50249">
    <property type="entry name" value="Nucleic acid-binding proteins"/>
    <property type="match status" value="1"/>
</dbReference>
<dbReference type="PROSITE" id="PS50862">
    <property type="entry name" value="AA_TRNA_LIGASE_II"/>
    <property type="match status" value="1"/>
</dbReference>
<protein>
    <recommendedName>
        <fullName evidence="1">Asparagine--tRNA ligase</fullName>
        <ecNumber evidence="1">6.1.1.22</ecNumber>
    </recommendedName>
    <alternativeName>
        <fullName evidence="1">Asparaginyl-tRNA synthetase</fullName>
        <shortName evidence="1">AsnRS</shortName>
    </alternativeName>
</protein>
<feature type="chain" id="PRO_1000051430" description="Asparagine--tRNA ligase">
    <location>
        <begin position="1"/>
        <end position="466"/>
    </location>
</feature>
<evidence type="ECO:0000255" key="1">
    <source>
        <dbReference type="HAMAP-Rule" id="MF_00534"/>
    </source>
</evidence>
<sequence length="466" mass="52570">MSVVPVADVLQGRVAVDSEVTVRGWVRTRRDSKAGISFLAVYDGSCFDPVQAVINNSLPNYNEDVLRLTTGCSVIVTGKVVASPGQGQQFEIQASKVEVAGWVEDPDTYPMAAKRHSIEYLREVAHLRPRTNLIGAVARVRHTLAQALHRFFNEQGFFWVSTPLITASDTEGAGEMFRVSTLDLENLPRNDQGKVDFDKDFFGKESFLTVSGQLNGETYACALSKIYTFGPTFRAENSNTSRHLAEFWMLEPEVAFANLNDIAGLAEAMLKYVFKAVLEERADDMKFFAERVDKDAVSRLERFIEADFAQVDYTDAVTILENCGRKFENPVYWGVDLSSEHERYLAEEHFKAPVVVKNYPKDIKAFYMRLNEDGKTVAAMDVLAPGIGEIIGGSQREERLDVLDERMLEMGLNKEDYWWYRDLRRYGTVPHSGFGLGFERLIAYVTGVQNVRDVIPFPRTPRNASF</sequence>
<accession>Q31YR7</accession>
<organism>
    <name type="scientific">Shigella boydii serotype 4 (strain Sb227)</name>
    <dbReference type="NCBI Taxonomy" id="300268"/>
    <lineage>
        <taxon>Bacteria</taxon>
        <taxon>Pseudomonadati</taxon>
        <taxon>Pseudomonadota</taxon>
        <taxon>Gammaproteobacteria</taxon>
        <taxon>Enterobacterales</taxon>
        <taxon>Enterobacteriaceae</taxon>
        <taxon>Shigella</taxon>
    </lineage>
</organism>
<name>SYN_SHIBS</name>
<reference key="1">
    <citation type="journal article" date="2005" name="Nucleic Acids Res.">
        <title>Genome dynamics and diversity of Shigella species, the etiologic agents of bacillary dysentery.</title>
        <authorList>
            <person name="Yang F."/>
            <person name="Yang J."/>
            <person name="Zhang X."/>
            <person name="Chen L."/>
            <person name="Jiang Y."/>
            <person name="Yan Y."/>
            <person name="Tang X."/>
            <person name="Wang J."/>
            <person name="Xiong Z."/>
            <person name="Dong J."/>
            <person name="Xue Y."/>
            <person name="Zhu Y."/>
            <person name="Xu X."/>
            <person name="Sun L."/>
            <person name="Chen S."/>
            <person name="Nie H."/>
            <person name="Peng J."/>
            <person name="Xu J."/>
            <person name="Wang Y."/>
            <person name="Yuan Z."/>
            <person name="Wen Y."/>
            <person name="Yao Z."/>
            <person name="Shen Y."/>
            <person name="Qiang B."/>
            <person name="Hou Y."/>
            <person name="Yu J."/>
            <person name="Jin Q."/>
        </authorList>
    </citation>
    <scope>NUCLEOTIDE SEQUENCE [LARGE SCALE GENOMIC DNA]</scope>
    <source>
        <strain>Sb227</strain>
    </source>
</reference>
<keyword id="KW-0030">Aminoacyl-tRNA synthetase</keyword>
<keyword id="KW-0067">ATP-binding</keyword>
<keyword id="KW-0963">Cytoplasm</keyword>
<keyword id="KW-0436">Ligase</keyword>
<keyword id="KW-0547">Nucleotide-binding</keyword>
<keyword id="KW-0648">Protein biosynthesis</keyword>